<protein>
    <recommendedName>
        <fullName>2-acylglycerol O-acyltransferase 2-A</fullName>
        <ecNumber evidence="1">2.3.1.20</ecNumber>
        <ecNumber evidence="1">2.3.1.22</ecNumber>
    </recommendedName>
    <alternativeName>
        <fullName>Acyl-CoA:monoacylglycerol acyltransferase 2-A</fullName>
        <shortName>MGAT2-A</shortName>
    </alternativeName>
    <alternativeName>
        <fullName>Monoacylglycerol O-acyltransferase 2-A</fullName>
    </alternativeName>
</protein>
<organism>
    <name type="scientific">Xenopus laevis</name>
    <name type="common">African clawed frog</name>
    <dbReference type="NCBI Taxonomy" id="8355"/>
    <lineage>
        <taxon>Eukaryota</taxon>
        <taxon>Metazoa</taxon>
        <taxon>Chordata</taxon>
        <taxon>Craniata</taxon>
        <taxon>Vertebrata</taxon>
        <taxon>Euteleostomi</taxon>
        <taxon>Amphibia</taxon>
        <taxon>Batrachia</taxon>
        <taxon>Anura</taxon>
        <taxon>Pipoidea</taxon>
        <taxon>Pipidae</taxon>
        <taxon>Xenopodinae</taxon>
        <taxon>Xenopus</taxon>
        <taxon>Xenopus</taxon>
    </lineage>
</organism>
<accession>Q2KHS5</accession>
<name>MOG2A_XENLA</name>
<dbReference type="EC" id="2.3.1.20" evidence="1"/>
<dbReference type="EC" id="2.3.1.22" evidence="1"/>
<dbReference type="EMBL" id="BC112915">
    <property type="protein sequence ID" value="AAI12916.1"/>
    <property type="molecule type" value="mRNA"/>
</dbReference>
<dbReference type="RefSeq" id="NP_001089961.1">
    <property type="nucleotide sequence ID" value="NM_001096492.1"/>
</dbReference>
<dbReference type="DNASU" id="735031"/>
<dbReference type="GeneID" id="735031"/>
<dbReference type="KEGG" id="xla:735031"/>
<dbReference type="AGR" id="Xenbase:XB-GENE-5764987"/>
<dbReference type="CTD" id="735031"/>
<dbReference type="Xenbase" id="XB-GENE-5764987">
    <property type="gene designation" value="mogat2.2.L"/>
</dbReference>
<dbReference type="OMA" id="FWFTCAN"/>
<dbReference type="OrthoDB" id="264532at2759"/>
<dbReference type="UniPathway" id="UPA00282"/>
<dbReference type="Proteomes" id="UP000186698">
    <property type="component" value="Chromosome 2L"/>
</dbReference>
<dbReference type="Bgee" id="735031">
    <property type="expression patterns" value="Expressed in intestine and 7 other cell types or tissues"/>
</dbReference>
<dbReference type="GO" id="GO:0005789">
    <property type="term" value="C:endoplasmic reticulum membrane"/>
    <property type="evidence" value="ECO:0000318"/>
    <property type="project" value="GO_Central"/>
</dbReference>
<dbReference type="GO" id="GO:1990578">
    <property type="term" value="C:perinuclear endoplasmic reticulum membrane"/>
    <property type="evidence" value="ECO:0000250"/>
    <property type="project" value="UniProtKB"/>
</dbReference>
<dbReference type="GO" id="GO:0003846">
    <property type="term" value="F:2-acylglycerol O-acyltransferase activity"/>
    <property type="evidence" value="ECO:0000250"/>
    <property type="project" value="UniProtKB"/>
</dbReference>
<dbReference type="GO" id="GO:0004144">
    <property type="term" value="F:diacylglycerol O-acyltransferase activity"/>
    <property type="evidence" value="ECO:0000318"/>
    <property type="project" value="GO_Central"/>
</dbReference>
<dbReference type="GO" id="GO:0006651">
    <property type="term" value="P:diacylglycerol biosynthetic process"/>
    <property type="evidence" value="ECO:0000318"/>
    <property type="project" value="GO_Central"/>
</dbReference>
<dbReference type="GO" id="GO:0006071">
    <property type="term" value="P:glycerol metabolic process"/>
    <property type="evidence" value="ECO:0007669"/>
    <property type="project" value="UniProtKB-KW"/>
</dbReference>
<dbReference type="GO" id="GO:0006640">
    <property type="term" value="P:monoacylglycerol biosynthetic process"/>
    <property type="evidence" value="ECO:0000250"/>
    <property type="project" value="UniProtKB"/>
</dbReference>
<dbReference type="GO" id="GO:0019432">
    <property type="term" value="P:triglyceride biosynthetic process"/>
    <property type="evidence" value="ECO:0000318"/>
    <property type="project" value="GO_Central"/>
</dbReference>
<dbReference type="CDD" id="cd07987">
    <property type="entry name" value="LPLAT_MGAT-like"/>
    <property type="match status" value="1"/>
</dbReference>
<dbReference type="InterPro" id="IPR007130">
    <property type="entry name" value="DAGAT"/>
</dbReference>
<dbReference type="PANTHER" id="PTHR12317:SF74">
    <property type="entry name" value="2-ACYLGLYCEROL O-ACYLTRANSFERASE 2"/>
    <property type="match status" value="1"/>
</dbReference>
<dbReference type="PANTHER" id="PTHR12317">
    <property type="entry name" value="DIACYLGLYCEROL O-ACYLTRANSFERASE"/>
    <property type="match status" value="1"/>
</dbReference>
<dbReference type="Pfam" id="PF03982">
    <property type="entry name" value="DAGAT"/>
    <property type="match status" value="1"/>
</dbReference>
<dbReference type="SUPFAM" id="SSF69593">
    <property type="entry name" value="Glycerol-3-phosphate (1)-acyltransferase"/>
    <property type="match status" value="1"/>
</dbReference>
<feature type="chain" id="PRO_0000249064" description="2-acylglycerol O-acyltransferase 2-A">
    <location>
        <begin position="1"/>
        <end position="335"/>
    </location>
</feature>
<feature type="transmembrane region" description="Helical" evidence="3">
    <location>
        <begin position="24"/>
        <end position="44"/>
    </location>
</feature>
<feature type="transmembrane region" description="Helical" evidence="3">
    <location>
        <begin position="47"/>
        <end position="67"/>
    </location>
</feature>
<evidence type="ECO:0000250" key="1">
    <source>
        <dbReference type="UniProtKB" id="Q3SYC2"/>
    </source>
</evidence>
<evidence type="ECO:0000250" key="2">
    <source>
        <dbReference type="UniProtKB" id="Q80W94"/>
    </source>
</evidence>
<evidence type="ECO:0000255" key="3"/>
<evidence type="ECO:0000305" key="4"/>
<reference key="1">
    <citation type="submission" date="2006-02" db="EMBL/GenBank/DDBJ databases">
        <authorList>
            <consortium name="NIH - Xenopus Gene Collection (XGC) project"/>
        </authorList>
    </citation>
    <scope>NUCLEOTIDE SEQUENCE [LARGE SCALE MRNA]</scope>
    <source>
        <tissue>Embryo</tissue>
    </source>
</reference>
<proteinExistence type="evidence at transcript level"/>
<comment type="function">
    <text evidence="1">Catalyzes the formation of diacylglycerol from 2-monoacylglycerol and fatty acyl-CoA.</text>
</comment>
<comment type="function">
    <text evidence="1 2">Involved in glycerolipid synthesis and lipid metabolism. Catalyzes the formation of diacylglycerol, the precursor of triacylglycerol, by transferring the acyl chain of a fatty acyl-CoA to a monoacylglycerol (By similarity). Plays a central role in absorption of dietary fat in the small intestine by catalyzing the resynthesis of triacylglycerol in enterocytes (By similarity). Has a preference toward monoacylglycerols containing unsaturated fatty acids in an order of C18:3 &gt; C18:2 &gt; C18:1 &gt; C18:0 at sn-2. Able to use 1-monoalkylglycerol (1-MAkG, 1-O-alkylglycerol) as an acyl acceptor for the synthesis of monoalkyl-monoacylglycerol (MAMAG, 1-O-alkyl-3-acylglycerol or 1-O-alkyl-2-acylglycerol) and subsequently, with lower efficiency, may add another acyl chain producing monoalkyl-diacylglycerol (MADAG, 1-O-alkyl-2,3-diacylglycerol). Possesses weak but significant activity with diacylglycerol as substrate, producing triacylglycerol (triacyl-sn-glycerol) (By similarity).</text>
</comment>
<comment type="catalytic activity">
    <reaction evidence="1">
        <text>a 2-acylglycerol + an acyl-CoA = a 1,2-diacylglycerol + CoA</text>
        <dbReference type="Rhea" id="RHEA:16741"/>
        <dbReference type="ChEBI" id="CHEBI:17389"/>
        <dbReference type="ChEBI" id="CHEBI:49172"/>
        <dbReference type="ChEBI" id="CHEBI:57287"/>
        <dbReference type="ChEBI" id="CHEBI:58342"/>
        <dbReference type="EC" id="2.3.1.22"/>
    </reaction>
    <physiologicalReaction direction="left-to-right" evidence="1">
        <dbReference type="Rhea" id="RHEA:16742"/>
    </physiologicalReaction>
</comment>
<comment type="catalytic activity">
    <reaction evidence="1">
        <text>a 2-acylglycerol + an acyl-CoA = a 1,2-diacyl-sn-glycerol + CoA</text>
        <dbReference type="Rhea" id="RHEA:32947"/>
        <dbReference type="ChEBI" id="CHEBI:17389"/>
        <dbReference type="ChEBI" id="CHEBI:17815"/>
        <dbReference type="ChEBI" id="CHEBI:57287"/>
        <dbReference type="ChEBI" id="CHEBI:58342"/>
    </reaction>
    <physiologicalReaction direction="left-to-right" evidence="1">
        <dbReference type="Rhea" id="RHEA:32948"/>
    </physiologicalReaction>
</comment>
<comment type="catalytic activity">
    <reaction evidence="1">
        <text>a 2-acylglycerol + an acyl-CoA = a 2,3-diacyl-sn-glycerol + CoA</text>
        <dbReference type="Rhea" id="RHEA:38467"/>
        <dbReference type="ChEBI" id="CHEBI:17389"/>
        <dbReference type="ChEBI" id="CHEBI:57287"/>
        <dbReference type="ChEBI" id="CHEBI:58342"/>
        <dbReference type="ChEBI" id="CHEBI:75524"/>
    </reaction>
    <physiologicalReaction direction="left-to-right" evidence="1">
        <dbReference type="Rhea" id="RHEA:38468"/>
    </physiologicalReaction>
</comment>
<comment type="catalytic activity">
    <reaction evidence="1">
        <text>a 1-acylglycerol + an acyl-CoA = a 1,2-diacylglycerol + CoA</text>
        <dbReference type="Rhea" id="RHEA:39943"/>
        <dbReference type="ChEBI" id="CHEBI:35759"/>
        <dbReference type="ChEBI" id="CHEBI:49172"/>
        <dbReference type="ChEBI" id="CHEBI:57287"/>
        <dbReference type="ChEBI" id="CHEBI:58342"/>
    </reaction>
    <physiologicalReaction direction="left-to-right" evidence="1">
        <dbReference type="Rhea" id="RHEA:39944"/>
    </physiologicalReaction>
</comment>
<comment type="catalytic activity">
    <reaction evidence="1">
        <text>a 1-acylglycerol + an acyl-CoA = a 1,3-diacylglycerol + CoA</text>
        <dbReference type="Rhea" id="RHEA:77571"/>
        <dbReference type="ChEBI" id="CHEBI:35759"/>
        <dbReference type="ChEBI" id="CHEBI:47777"/>
        <dbReference type="ChEBI" id="CHEBI:57287"/>
        <dbReference type="ChEBI" id="CHEBI:58342"/>
    </reaction>
    <physiologicalReaction direction="left-to-right" evidence="1">
        <dbReference type="Rhea" id="RHEA:77572"/>
    </physiologicalReaction>
</comment>
<comment type="catalytic activity">
    <reaction evidence="1">
        <text>1-O-alkylglycerol + an acyl-CoA = 1-O-alkyl-3-acylglycerol + CoA</text>
        <dbReference type="Rhea" id="RHEA:77627"/>
        <dbReference type="ChEBI" id="CHEBI:57287"/>
        <dbReference type="ChEBI" id="CHEBI:58342"/>
        <dbReference type="ChEBI" id="CHEBI:76225"/>
        <dbReference type="ChEBI" id="CHEBI:77997"/>
    </reaction>
    <physiologicalReaction direction="left-to-right" evidence="1">
        <dbReference type="Rhea" id="RHEA:77628"/>
    </physiologicalReaction>
</comment>
<comment type="catalytic activity">
    <reaction evidence="1">
        <text>an acyl-CoA + a 1,2-diacyl-sn-glycerol = a triacyl-sn-glycerol + CoA</text>
        <dbReference type="Rhea" id="RHEA:10868"/>
        <dbReference type="ChEBI" id="CHEBI:17815"/>
        <dbReference type="ChEBI" id="CHEBI:57287"/>
        <dbReference type="ChEBI" id="CHEBI:58342"/>
        <dbReference type="ChEBI" id="CHEBI:64615"/>
        <dbReference type="EC" id="2.3.1.20"/>
    </reaction>
    <physiologicalReaction direction="left-to-right" evidence="1">
        <dbReference type="Rhea" id="RHEA:10869"/>
    </physiologicalReaction>
</comment>
<comment type="pathway">
    <text>Glycerolipid metabolism; triacylglycerol biosynthesis.</text>
</comment>
<comment type="subcellular location">
    <subcellularLocation>
        <location evidence="1">Endoplasmic reticulum membrane</location>
        <topology evidence="1">Multi-pass membrane protein</topology>
    </subcellularLocation>
    <subcellularLocation>
        <location evidence="1">Cytoplasm</location>
        <location evidence="1">Perinuclear region</location>
    </subcellularLocation>
</comment>
<comment type="similarity">
    <text evidence="4">Belongs to the diacylglycerol acyltransferase family.</text>
</comment>
<keyword id="KW-0012">Acyltransferase</keyword>
<keyword id="KW-0963">Cytoplasm</keyword>
<keyword id="KW-0256">Endoplasmic reticulum</keyword>
<keyword id="KW-0319">Glycerol metabolism</keyword>
<keyword id="KW-0444">Lipid biosynthesis</keyword>
<keyword id="KW-0443">Lipid metabolism</keyword>
<keyword id="KW-0472">Membrane</keyword>
<keyword id="KW-1185">Reference proteome</keyword>
<keyword id="KW-0808">Transferase</keyword>
<keyword id="KW-0812">Transmembrane</keyword>
<keyword id="KW-1133">Transmembrane helix</keyword>
<gene>
    <name type="primary">mogat2-a</name>
</gene>
<sequence>MKIQFAPHNVPFERRLQTAAVLQWVFSFLALAQTCILLFFVLLFTRFWIISVVYGVWWFLDWDTPSKGGRRGEWLRRHVIWTYMKDYFPITLVKTADLDPQQNYVVGSHPHGVLVAGAFTNFCTEATGFHRLFPGITPYLLMLPLWFRAPFFRDYIMSGGLIPSDKDSASYLLKNKAGGNAVVIAVGGAPESLDARPGAFTLLIKNRKGFVRLAILHGASLVPVFSFGENELFDQVDNPRGSWLRKIQEKLQKMMGVALPLFHARGVFQYSFGLIPYRKPIATIVGKPIRVEENPNPSSEEVDKLHKIYMEELSKLFEEHKTKYNVPADKHLTFV</sequence>